<sequence>MATEPMTNYGYEKLCAELKNLKEVERPRIVVEIDIARSHGDLKENAEYHAAREKQAFIEARINELGLMLANAQVIDPASLPHNKVSFGSSVKILNLDTDKEFVYTLVGSMESNPSKGLISVSSPIAKALMGKSEGDEVSITLPNGENEFEILEVFYKDIVFEG</sequence>
<proteinExistence type="inferred from homology"/>
<accession>Q7VJT9</accession>
<comment type="function">
    <text evidence="1">Necessary for efficient RNA polymerase transcription elongation past template-encoded arresting sites. The arresting sites in DNA have the property of trapping a certain fraction of elongating RNA polymerases that pass through, resulting in locked ternary complexes. Cleavage of the nascent transcript by cleavage factors such as GreA or GreB allows the resumption of elongation from the new 3'terminus. GreA releases sequences of 2 to 3 nucleotides.</text>
</comment>
<comment type="similarity">
    <text evidence="1">Belongs to the GreA/GreB family.</text>
</comment>
<name>GREA_HELHP</name>
<feature type="chain" id="PRO_1000034265" description="Transcription elongation factor GreA">
    <location>
        <begin position="1"/>
        <end position="163"/>
    </location>
</feature>
<feature type="coiled-coil region" evidence="1">
    <location>
        <begin position="45"/>
        <end position="65"/>
    </location>
</feature>
<protein>
    <recommendedName>
        <fullName evidence="1">Transcription elongation factor GreA</fullName>
    </recommendedName>
    <alternativeName>
        <fullName evidence="1">Transcript cleavage factor GreA</fullName>
    </alternativeName>
</protein>
<reference key="1">
    <citation type="journal article" date="2003" name="Proc. Natl. Acad. Sci. U.S.A.">
        <title>The complete genome sequence of the carcinogenic bacterium Helicobacter hepaticus.</title>
        <authorList>
            <person name="Suerbaum S."/>
            <person name="Josenhans C."/>
            <person name="Sterzenbach T."/>
            <person name="Drescher B."/>
            <person name="Brandt P."/>
            <person name="Bell M."/>
            <person name="Droege M."/>
            <person name="Fartmann B."/>
            <person name="Fischer H.-P."/>
            <person name="Ge Z."/>
            <person name="Hoerster A."/>
            <person name="Holland R."/>
            <person name="Klein K."/>
            <person name="Koenig J."/>
            <person name="Macko L."/>
            <person name="Mendz G.L."/>
            <person name="Nyakatura G."/>
            <person name="Schauer D.B."/>
            <person name="Shen Z."/>
            <person name="Weber J."/>
            <person name="Frosch M."/>
            <person name="Fox J.G."/>
        </authorList>
    </citation>
    <scope>NUCLEOTIDE SEQUENCE [LARGE SCALE GENOMIC DNA]</scope>
    <source>
        <strain>ATCC 51449 / 3B1</strain>
    </source>
</reference>
<organism>
    <name type="scientific">Helicobacter hepaticus (strain ATCC 51449 / 3B1)</name>
    <dbReference type="NCBI Taxonomy" id="235279"/>
    <lineage>
        <taxon>Bacteria</taxon>
        <taxon>Pseudomonadati</taxon>
        <taxon>Campylobacterota</taxon>
        <taxon>Epsilonproteobacteria</taxon>
        <taxon>Campylobacterales</taxon>
        <taxon>Helicobacteraceae</taxon>
        <taxon>Helicobacter</taxon>
    </lineage>
</organism>
<evidence type="ECO:0000255" key="1">
    <source>
        <dbReference type="HAMAP-Rule" id="MF_00105"/>
    </source>
</evidence>
<gene>
    <name evidence="1" type="primary">greA</name>
    <name type="ordered locus">HH_0154</name>
</gene>
<dbReference type="EMBL" id="AE017125">
    <property type="protein sequence ID" value="AAP76751.1"/>
    <property type="molecule type" value="Genomic_DNA"/>
</dbReference>
<dbReference type="SMR" id="Q7VJT9"/>
<dbReference type="STRING" id="235279.HH_0154"/>
<dbReference type="KEGG" id="hhe:HH_0154"/>
<dbReference type="eggNOG" id="COG0782">
    <property type="taxonomic scope" value="Bacteria"/>
</dbReference>
<dbReference type="HOGENOM" id="CLU_101379_2_0_7"/>
<dbReference type="Proteomes" id="UP000002495">
    <property type="component" value="Chromosome"/>
</dbReference>
<dbReference type="GO" id="GO:0003677">
    <property type="term" value="F:DNA binding"/>
    <property type="evidence" value="ECO:0007669"/>
    <property type="project" value="UniProtKB-UniRule"/>
</dbReference>
<dbReference type="GO" id="GO:0070063">
    <property type="term" value="F:RNA polymerase binding"/>
    <property type="evidence" value="ECO:0007669"/>
    <property type="project" value="InterPro"/>
</dbReference>
<dbReference type="GO" id="GO:0006354">
    <property type="term" value="P:DNA-templated transcription elongation"/>
    <property type="evidence" value="ECO:0007669"/>
    <property type="project" value="TreeGrafter"/>
</dbReference>
<dbReference type="GO" id="GO:0032784">
    <property type="term" value="P:regulation of DNA-templated transcription elongation"/>
    <property type="evidence" value="ECO:0007669"/>
    <property type="project" value="UniProtKB-UniRule"/>
</dbReference>
<dbReference type="FunFam" id="1.10.287.180:FF:000001">
    <property type="entry name" value="Transcription elongation factor GreA"/>
    <property type="match status" value="1"/>
</dbReference>
<dbReference type="FunFam" id="3.10.50.30:FF:000001">
    <property type="entry name" value="Transcription elongation factor GreA"/>
    <property type="match status" value="1"/>
</dbReference>
<dbReference type="Gene3D" id="3.10.50.30">
    <property type="entry name" value="Transcription elongation factor, GreA/GreB, C-terminal domain"/>
    <property type="match status" value="1"/>
</dbReference>
<dbReference type="Gene3D" id="1.10.287.180">
    <property type="entry name" value="Transcription elongation factor, GreA/GreB, N-terminal domain"/>
    <property type="match status" value="1"/>
</dbReference>
<dbReference type="HAMAP" id="MF_00105">
    <property type="entry name" value="GreA_GreB"/>
    <property type="match status" value="1"/>
</dbReference>
<dbReference type="InterPro" id="IPR036953">
    <property type="entry name" value="GreA/GreB_C_sf"/>
</dbReference>
<dbReference type="InterPro" id="IPR018151">
    <property type="entry name" value="TF_GreA/GreB_CS"/>
</dbReference>
<dbReference type="InterPro" id="IPR006359">
    <property type="entry name" value="Tscrpt_elong_fac_GreA"/>
</dbReference>
<dbReference type="InterPro" id="IPR028624">
    <property type="entry name" value="Tscrpt_elong_fac_GreA/B"/>
</dbReference>
<dbReference type="InterPro" id="IPR001437">
    <property type="entry name" value="Tscrpt_elong_fac_GreA/B_C"/>
</dbReference>
<dbReference type="InterPro" id="IPR023459">
    <property type="entry name" value="Tscrpt_elong_fac_GreA/B_fam"/>
</dbReference>
<dbReference type="InterPro" id="IPR022691">
    <property type="entry name" value="Tscrpt_elong_fac_GreA/B_N"/>
</dbReference>
<dbReference type="InterPro" id="IPR036805">
    <property type="entry name" value="Tscrpt_elong_fac_GreA/B_N_sf"/>
</dbReference>
<dbReference type="NCBIfam" id="TIGR01462">
    <property type="entry name" value="greA"/>
    <property type="match status" value="1"/>
</dbReference>
<dbReference type="NCBIfam" id="NF001261">
    <property type="entry name" value="PRK00226.1-2"/>
    <property type="match status" value="1"/>
</dbReference>
<dbReference type="NCBIfam" id="NF001263">
    <property type="entry name" value="PRK00226.1-4"/>
    <property type="match status" value="1"/>
</dbReference>
<dbReference type="NCBIfam" id="NF001264">
    <property type="entry name" value="PRK00226.1-5"/>
    <property type="match status" value="1"/>
</dbReference>
<dbReference type="PANTHER" id="PTHR30437">
    <property type="entry name" value="TRANSCRIPTION ELONGATION FACTOR GREA"/>
    <property type="match status" value="1"/>
</dbReference>
<dbReference type="PANTHER" id="PTHR30437:SF4">
    <property type="entry name" value="TRANSCRIPTION ELONGATION FACTOR GREA"/>
    <property type="match status" value="1"/>
</dbReference>
<dbReference type="Pfam" id="PF01272">
    <property type="entry name" value="GreA_GreB"/>
    <property type="match status" value="1"/>
</dbReference>
<dbReference type="Pfam" id="PF03449">
    <property type="entry name" value="GreA_GreB_N"/>
    <property type="match status" value="1"/>
</dbReference>
<dbReference type="PIRSF" id="PIRSF006092">
    <property type="entry name" value="GreA_GreB"/>
    <property type="match status" value="1"/>
</dbReference>
<dbReference type="SUPFAM" id="SSF54534">
    <property type="entry name" value="FKBP-like"/>
    <property type="match status" value="1"/>
</dbReference>
<dbReference type="SUPFAM" id="SSF46557">
    <property type="entry name" value="GreA transcript cleavage protein, N-terminal domain"/>
    <property type="match status" value="1"/>
</dbReference>
<dbReference type="PROSITE" id="PS00829">
    <property type="entry name" value="GREAB_1"/>
    <property type="match status" value="1"/>
</dbReference>
<keyword id="KW-0175">Coiled coil</keyword>
<keyword id="KW-0238">DNA-binding</keyword>
<keyword id="KW-1185">Reference proteome</keyword>
<keyword id="KW-0804">Transcription</keyword>
<keyword id="KW-0805">Transcription regulation</keyword>